<accession>P0C1L0</accession>
<accession>P0A046</accession>
<accession>P19380</accession>
<reference key="1">
    <citation type="journal article" date="1987" name="Gene">
        <title>IS431, a staphylococcal insertion sequence-like element related to IS26 from Proteus vulgaris.</title>
        <authorList>
            <person name="Barberis-Maino L."/>
            <person name="Berger-Baechi B."/>
            <person name="Weber H."/>
            <person name="Beck W.D."/>
            <person name="Kayser F.H."/>
        </authorList>
    </citation>
    <scope>NUCLEOTIDE SEQUENCE [GENOMIC DNA]</scope>
</reference>
<reference key="2">
    <citation type="journal article" date="1990" name="Nucleic Acids Res.">
        <title>Complete nucleotide sequence of IS431mec in Staphylococcus aureus.</title>
        <authorList>
            <person name="Barberis-Maino L."/>
            <person name="Ryffel C."/>
            <person name="Kayser F.H."/>
            <person name="Berger-Baechi B."/>
        </authorList>
    </citation>
    <scope>NUCLEOTIDE SEQUENCE [GENOMIC DNA]</scope>
</reference>
<evidence type="ECO:0000255" key="1"/>
<evidence type="ECO:0000255" key="2">
    <source>
        <dbReference type="PROSITE-ProRule" id="PRU00457"/>
    </source>
</evidence>
<comment type="function">
    <text>Involved in the transposition of the insertion sequence.</text>
</comment>
<gene>
    <name type="primary">tnp</name>
</gene>
<protein>
    <recommendedName>
        <fullName>Transposase for insertion sequence-like element IS431mec</fullName>
    </recommendedName>
</protein>
<proteinExistence type="predicted"/>
<feature type="chain" id="PRO_0000244873" description="Transposase for insertion sequence-like element IS431mec">
    <location>
        <begin position="1"/>
        <end position="224"/>
    </location>
</feature>
<feature type="domain" description="Integrase catalytic" evidence="2">
    <location>
        <begin position="73"/>
        <end position="222"/>
    </location>
</feature>
<feature type="DNA-binding region" description="H-T-H motif" evidence="1">
    <location>
        <begin position="33"/>
        <end position="52"/>
    </location>
</feature>
<sequence length="224" mass="26915">MNYFRYKQFNKDVITVAVGYYLRYTLSYRDISEILRERGVNVHHSTVYRWVQEYAPILYQIWKKKHKKAYYKWRIDETYIKIKGKWSYLYRAIDAEGHTLDIWLRKQRDNHSAYAFIKRLIKQFGKPQKVITDQAPSTKVAMAKVIKAFKLKPDCHCTSKYLNNLIEQDHRHIKVRKTRYQSINTAKNTLKGIECIYALYKKNRRSLQIYGFSPCHEISIMLAS</sequence>
<dbReference type="EMBL" id="X53818">
    <property type="protein sequence ID" value="CAA37814.1"/>
    <property type="molecule type" value="Genomic_DNA"/>
</dbReference>
<dbReference type="PIR" id="S12093">
    <property type="entry name" value="S12093"/>
</dbReference>
<dbReference type="SMR" id="P0C1L0"/>
<dbReference type="PaxDb" id="1280-SAXN108_0042"/>
<dbReference type="eggNOG" id="COG3316">
    <property type="taxonomic scope" value="Bacteria"/>
</dbReference>
<dbReference type="GO" id="GO:0003677">
    <property type="term" value="F:DNA binding"/>
    <property type="evidence" value="ECO:0007669"/>
    <property type="project" value="UniProtKB-KW"/>
</dbReference>
<dbReference type="GO" id="GO:0015074">
    <property type="term" value="P:DNA integration"/>
    <property type="evidence" value="ECO:0007669"/>
    <property type="project" value="InterPro"/>
</dbReference>
<dbReference type="GO" id="GO:0006310">
    <property type="term" value="P:DNA recombination"/>
    <property type="evidence" value="ECO:0007669"/>
    <property type="project" value="UniProtKB-KW"/>
</dbReference>
<dbReference type="GO" id="GO:0032196">
    <property type="term" value="P:transposition"/>
    <property type="evidence" value="ECO:0007669"/>
    <property type="project" value="UniProtKB-KW"/>
</dbReference>
<dbReference type="Gene3D" id="3.30.420.10">
    <property type="entry name" value="Ribonuclease H-like superfamily/Ribonuclease H"/>
    <property type="match status" value="1"/>
</dbReference>
<dbReference type="InterPro" id="IPR032874">
    <property type="entry name" value="DDE_dom"/>
</dbReference>
<dbReference type="InterPro" id="IPR001584">
    <property type="entry name" value="Integrase_cat-core"/>
</dbReference>
<dbReference type="InterPro" id="IPR052183">
    <property type="entry name" value="IS_Transposase"/>
</dbReference>
<dbReference type="InterPro" id="IPR012337">
    <property type="entry name" value="RNaseH-like_sf"/>
</dbReference>
<dbReference type="InterPro" id="IPR036397">
    <property type="entry name" value="RNaseH_sf"/>
</dbReference>
<dbReference type="InterPro" id="IPR047930">
    <property type="entry name" value="Transpos_IS6"/>
</dbReference>
<dbReference type="NCBIfam" id="NF033587">
    <property type="entry name" value="transpos_IS6"/>
    <property type="match status" value="1"/>
</dbReference>
<dbReference type="PANTHER" id="PTHR35528">
    <property type="entry name" value="BLL1675 PROTEIN"/>
    <property type="match status" value="1"/>
</dbReference>
<dbReference type="PANTHER" id="PTHR35528:SF3">
    <property type="entry name" value="BLL1675 PROTEIN"/>
    <property type="match status" value="1"/>
</dbReference>
<dbReference type="Pfam" id="PF13610">
    <property type="entry name" value="DDE_Tnp_IS240"/>
    <property type="match status" value="1"/>
</dbReference>
<dbReference type="SUPFAM" id="SSF53098">
    <property type="entry name" value="Ribonuclease H-like"/>
    <property type="match status" value="1"/>
</dbReference>
<dbReference type="PROSITE" id="PS50994">
    <property type="entry name" value="INTEGRASE"/>
    <property type="match status" value="1"/>
</dbReference>
<name>T431_STAA8</name>
<keyword id="KW-0233">DNA recombination</keyword>
<keyword id="KW-0238">DNA-binding</keyword>
<keyword id="KW-0814">Transposable element</keyword>
<keyword id="KW-0815">Transposition</keyword>
<organism>
    <name type="scientific">Staphylococcus aureus (strain NCTC 8325 / PS 47)</name>
    <dbReference type="NCBI Taxonomy" id="93061"/>
    <lineage>
        <taxon>Bacteria</taxon>
        <taxon>Bacillati</taxon>
        <taxon>Bacillota</taxon>
        <taxon>Bacilli</taxon>
        <taxon>Bacillales</taxon>
        <taxon>Staphylococcaceae</taxon>
        <taxon>Staphylococcus</taxon>
    </lineage>
</organism>